<keyword id="KW-0276">Fatty acid metabolism</keyword>
<keyword id="KW-0285">Flavoprotein</keyword>
<keyword id="KW-0288">FMN</keyword>
<keyword id="KW-0443">Lipid metabolism</keyword>
<keyword id="KW-0560">Oxidoreductase</keyword>
<keyword id="KW-0576">Peroxisome</keyword>
<keyword id="KW-1185">Reference proteome</keyword>
<protein>
    <recommendedName>
        <fullName>2-Hydroxyacid oxidase 2</fullName>
        <shortName>HAOX2</shortName>
        <ecNumber evidence="2">1.1.3.15</ecNumber>
    </recommendedName>
    <alternativeName>
        <fullName>(S)-2-hydroxy-acid oxidase, peroxisomal</fullName>
    </alternativeName>
</protein>
<accession>Q3ZBW2</accession>
<gene>
    <name type="primary">HAO2</name>
</gene>
<reference key="1">
    <citation type="submission" date="2005-08" db="EMBL/GenBank/DDBJ databases">
        <authorList>
            <consortium name="NIH - Mammalian Gene Collection (MGC) project"/>
        </authorList>
    </citation>
    <scope>NUCLEOTIDE SEQUENCE [LARGE SCALE MRNA]</scope>
    <source>
        <strain>Hereford</strain>
        <tissue>Fetal liver</tissue>
    </source>
</reference>
<evidence type="ECO:0000250" key="1">
    <source>
        <dbReference type="UniProtKB" id="Q07523"/>
    </source>
</evidence>
<evidence type="ECO:0000250" key="2">
    <source>
        <dbReference type="UniProtKB" id="Q9NYQ3"/>
    </source>
</evidence>
<evidence type="ECO:0000250" key="3">
    <source>
        <dbReference type="UniProtKB" id="Q9UJM8"/>
    </source>
</evidence>
<evidence type="ECO:0000255" key="4"/>
<evidence type="ECO:0000255" key="5">
    <source>
        <dbReference type="PROSITE-ProRule" id="PRU00683"/>
    </source>
</evidence>
<organism>
    <name type="scientific">Bos taurus</name>
    <name type="common">Bovine</name>
    <dbReference type="NCBI Taxonomy" id="9913"/>
    <lineage>
        <taxon>Eukaryota</taxon>
        <taxon>Metazoa</taxon>
        <taxon>Chordata</taxon>
        <taxon>Craniata</taxon>
        <taxon>Vertebrata</taxon>
        <taxon>Euteleostomi</taxon>
        <taxon>Mammalia</taxon>
        <taxon>Eutheria</taxon>
        <taxon>Laurasiatheria</taxon>
        <taxon>Artiodactyla</taxon>
        <taxon>Ruminantia</taxon>
        <taxon>Pecora</taxon>
        <taxon>Bovidae</taxon>
        <taxon>Bovinae</taxon>
        <taxon>Bos</taxon>
    </lineage>
</organism>
<feature type="chain" id="PRO_0000285088" description="2-Hydroxyacid oxidase 2">
    <location>
        <begin position="1"/>
        <end position="353"/>
    </location>
</feature>
<feature type="domain" description="FMN hydroxy acid dehydrogenase" evidence="5">
    <location>
        <begin position="2"/>
        <end position="353"/>
    </location>
</feature>
<feature type="short sequence motif" description="Microbody targeting signal" evidence="4">
    <location>
        <begin position="351"/>
        <end position="353"/>
    </location>
</feature>
<feature type="active site" description="Proton acceptor" evidence="5">
    <location>
        <position position="248"/>
    </location>
</feature>
<feature type="binding site" evidence="1">
    <location>
        <begin position="77"/>
        <end position="79"/>
    </location>
    <ligand>
        <name>FMN</name>
        <dbReference type="ChEBI" id="CHEBI:58210"/>
    </ligand>
</feature>
<feature type="binding site" evidence="1">
    <location>
        <position position="106"/>
    </location>
    <ligand>
        <name>FMN</name>
        <dbReference type="ChEBI" id="CHEBI:58210"/>
    </ligand>
</feature>
<feature type="binding site" evidence="1">
    <location>
        <position position="128"/>
    </location>
    <ligand>
        <name>FMN</name>
        <dbReference type="ChEBI" id="CHEBI:58210"/>
    </ligand>
</feature>
<feature type="binding site" evidence="5">
    <location>
        <position position="130"/>
    </location>
    <ligand>
        <name>a 2-oxocarboxylate</name>
        <dbReference type="ChEBI" id="CHEBI:35179"/>
    </ligand>
</feature>
<feature type="binding site" evidence="1">
    <location>
        <position position="156"/>
    </location>
    <ligand>
        <name>FMN</name>
        <dbReference type="ChEBI" id="CHEBI:58210"/>
    </ligand>
</feature>
<feature type="binding site" evidence="5">
    <location>
        <position position="165"/>
    </location>
    <ligand>
        <name>a 2-oxocarboxylate</name>
        <dbReference type="ChEBI" id="CHEBI:35179"/>
    </ligand>
</feature>
<feature type="binding site" evidence="1">
    <location>
        <position position="224"/>
    </location>
    <ligand>
        <name>FMN</name>
        <dbReference type="ChEBI" id="CHEBI:58210"/>
    </ligand>
</feature>
<feature type="binding site" evidence="5">
    <location>
        <position position="251"/>
    </location>
    <ligand>
        <name>a 2-oxocarboxylate</name>
        <dbReference type="ChEBI" id="CHEBI:35179"/>
    </ligand>
</feature>
<feature type="binding site" evidence="1">
    <location>
        <begin position="279"/>
        <end position="283"/>
    </location>
    <ligand>
        <name>FMN</name>
        <dbReference type="ChEBI" id="CHEBI:58210"/>
    </ligand>
</feature>
<feature type="binding site" evidence="1">
    <location>
        <begin position="302"/>
        <end position="303"/>
    </location>
    <ligand>
        <name>FMN</name>
        <dbReference type="ChEBI" id="CHEBI:58210"/>
    </ligand>
</feature>
<name>HAOX2_BOVIN</name>
<proteinExistence type="evidence at transcript level"/>
<dbReference type="EC" id="1.1.3.15" evidence="2"/>
<dbReference type="EMBL" id="BC103070">
    <property type="protein sequence ID" value="AAI03071.1"/>
    <property type="molecule type" value="mRNA"/>
</dbReference>
<dbReference type="RefSeq" id="NP_001030243.1">
    <property type="nucleotide sequence ID" value="NM_001035071.1"/>
</dbReference>
<dbReference type="RefSeq" id="XP_005204069.1">
    <property type="nucleotide sequence ID" value="XM_005204012.5"/>
</dbReference>
<dbReference type="SMR" id="Q3ZBW2"/>
<dbReference type="FunCoup" id="Q3ZBW2">
    <property type="interactions" value="313"/>
</dbReference>
<dbReference type="STRING" id="9913.ENSBTAP00000000134"/>
<dbReference type="PaxDb" id="9913-ENSBTAP00000000134"/>
<dbReference type="PeptideAtlas" id="Q3ZBW2"/>
<dbReference type="Ensembl" id="ENSBTAT00000000134.4">
    <property type="protein sequence ID" value="ENSBTAP00000000134.3"/>
    <property type="gene ID" value="ENSBTAG00000000123.5"/>
</dbReference>
<dbReference type="GeneID" id="509481"/>
<dbReference type="KEGG" id="bta:509481"/>
<dbReference type="CTD" id="51179"/>
<dbReference type="VEuPathDB" id="HostDB:ENSBTAG00000000123"/>
<dbReference type="VGNC" id="VGNC:29748">
    <property type="gene designation" value="HAO2"/>
</dbReference>
<dbReference type="eggNOG" id="KOG0538">
    <property type="taxonomic scope" value="Eukaryota"/>
</dbReference>
<dbReference type="GeneTree" id="ENSGT00390000018717"/>
<dbReference type="HOGENOM" id="CLU_020639_0_0_1"/>
<dbReference type="InParanoid" id="Q3ZBW2"/>
<dbReference type="OMA" id="WADFQYE"/>
<dbReference type="OrthoDB" id="25826at2759"/>
<dbReference type="TreeFam" id="TF313363"/>
<dbReference type="Reactome" id="R-BTA-390918">
    <property type="pathway name" value="Peroxisomal lipid metabolism"/>
</dbReference>
<dbReference type="Reactome" id="R-BTA-9033241">
    <property type="pathway name" value="Peroxisomal protein import"/>
</dbReference>
<dbReference type="UniPathway" id="UPA00199"/>
<dbReference type="Proteomes" id="UP000009136">
    <property type="component" value="Chromosome 3"/>
</dbReference>
<dbReference type="Bgee" id="ENSBTAG00000000123">
    <property type="expression patterns" value="Expressed in adult mammalian kidney and 29 other cell types or tissues"/>
</dbReference>
<dbReference type="GO" id="GO:0005782">
    <property type="term" value="C:peroxisomal matrix"/>
    <property type="evidence" value="ECO:0000318"/>
    <property type="project" value="GO_Central"/>
</dbReference>
<dbReference type="GO" id="GO:0003973">
    <property type="term" value="F:(S)-2-hydroxy-acid oxidase activity"/>
    <property type="evidence" value="ECO:0000318"/>
    <property type="project" value="GO_Central"/>
</dbReference>
<dbReference type="GO" id="GO:0010181">
    <property type="term" value="F:FMN binding"/>
    <property type="evidence" value="ECO:0007669"/>
    <property type="project" value="InterPro"/>
</dbReference>
<dbReference type="GO" id="GO:0019395">
    <property type="term" value="P:fatty acid oxidation"/>
    <property type="evidence" value="ECO:0007669"/>
    <property type="project" value="Ensembl"/>
</dbReference>
<dbReference type="CDD" id="cd02809">
    <property type="entry name" value="alpha_hydroxyacid_oxid_FMN"/>
    <property type="match status" value="1"/>
</dbReference>
<dbReference type="FunFam" id="3.20.20.70:FF:000056">
    <property type="entry name" value="hydroxyacid oxidase 2"/>
    <property type="match status" value="1"/>
</dbReference>
<dbReference type="Gene3D" id="3.20.20.70">
    <property type="entry name" value="Aldolase class I"/>
    <property type="match status" value="1"/>
</dbReference>
<dbReference type="InterPro" id="IPR013785">
    <property type="entry name" value="Aldolase_TIM"/>
</dbReference>
<dbReference type="InterPro" id="IPR012133">
    <property type="entry name" value="Alpha-hydoxy_acid_DH_FMN"/>
</dbReference>
<dbReference type="InterPro" id="IPR000262">
    <property type="entry name" value="FMN-dep_DH"/>
</dbReference>
<dbReference type="InterPro" id="IPR037396">
    <property type="entry name" value="FMN_HAD"/>
</dbReference>
<dbReference type="InterPro" id="IPR008259">
    <property type="entry name" value="FMN_hydac_DH_AS"/>
</dbReference>
<dbReference type="PANTHER" id="PTHR10578:SF149">
    <property type="entry name" value="2-HYDROXYACID OXIDASE 2"/>
    <property type="match status" value="1"/>
</dbReference>
<dbReference type="PANTHER" id="PTHR10578">
    <property type="entry name" value="S -2-HYDROXY-ACID OXIDASE-RELATED"/>
    <property type="match status" value="1"/>
</dbReference>
<dbReference type="Pfam" id="PF01070">
    <property type="entry name" value="FMN_dh"/>
    <property type="match status" value="1"/>
</dbReference>
<dbReference type="PIRSF" id="PIRSF000138">
    <property type="entry name" value="Al-hdrx_acd_dh"/>
    <property type="match status" value="1"/>
</dbReference>
<dbReference type="SUPFAM" id="SSF51395">
    <property type="entry name" value="FMN-linked oxidoreductases"/>
    <property type="match status" value="1"/>
</dbReference>
<dbReference type="PROSITE" id="PS00557">
    <property type="entry name" value="FMN_HYDROXY_ACID_DH_1"/>
    <property type="match status" value="1"/>
</dbReference>
<dbReference type="PROSITE" id="PS51349">
    <property type="entry name" value="FMN_HYDROXY_ACID_DH_2"/>
    <property type="match status" value="1"/>
</dbReference>
<sequence>MPLVCLTDFREHAREHLSKSTWDFIEGGADDCCTRDENMAAFKKIRLRPRYLKDVSKVDMRTTIQGAEISAPICIAPTGFHRLAWPDGEMSTARAAQAASICYITSTYASCSLEDIVAAAPRGLRWFQLYVHPNRQINKQMIQKVESLGFKALVITVDVPKVGNRRNDITNQVDLMKKLLLKDLGSPEMGNVMPYFQMSPIDPSICWEDLSWFQSMTRLPIILKGILTKEDAELAVKHNVHGIIVSNHGGRQLDEVPASIDALTEVVAAVKGKVEVYLDGGIRTGNDVLKALALGAKCVFVGRPILWGLAYKGEHGVKEVLDILKNEFHTSMTLTGCRSVAEINQDLIQFSRL</sequence>
<comment type="function">
    <text evidence="2">Oxidase that catalyzes the oxidation of medium and long chain hydroxyacids such as 2-hydroxyhexadecanoate and 2-hydroxyoctanoate, to the correspondong 2-oxoacids. Its role in the oxidation of 2-hydroxy fatty acids may contribute to the general pathway of fatty acid alpha-oxidation. Active in vitro with the artificial electron acceptor 2,6-dichlorophenolindophenol (DCIP), but O2 is believed to be the physiological electron acceptor, leading to the production of H2O2.</text>
</comment>
<comment type="catalytic activity">
    <reaction evidence="2">
        <text>a (2S)-2-hydroxycarboxylate + O2 = a 2-oxocarboxylate + H2O2</text>
        <dbReference type="Rhea" id="RHEA:16789"/>
        <dbReference type="ChEBI" id="CHEBI:15379"/>
        <dbReference type="ChEBI" id="CHEBI:16240"/>
        <dbReference type="ChEBI" id="CHEBI:35179"/>
        <dbReference type="ChEBI" id="CHEBI:58123"/>
        <dbReference type="EC" id="1.1.3.15"/>
    </reaction>
    <physiologicalReaction direction="left-to-right" evidence="2">
        <dbReference type="Rhea" id="RHEA:16790"/>
    </physiologicalReaction>
</comment>
<comment type="catalytic activity">
    <reaction evidence="2">
        <text>2-hydroxyhexadecanoate + O2 = 2-oxohexadecanoate + H2O2</text>
        <dbReference type="Rhea" id="RHEA:67944"/>
        <dbReference type="ChEBI" id="CHEBI:15379"/>
        <dbReference type="ChEBI" id="CHEBI:16240"/>
        <dbReference type="ChEBI" id="CHEBI:65097"/>
        <dbReference type="ChEBI" id="CHEBI:176593"/>
    </reaction>
    <physiologicalReaction direction="left-to-right" evidence="2">
        <dbReference type="Rhea" id="RHEA:67945"/>
    </physiologicalReaction>
</comment>
<comment type="catalytic activity">
    <reaction evidence="2">
        <text>2-hydroxyoctanoate + O2 = 2-oxooctanoate + H2O2</text>
        <dbReference type="Rhea" id="RHEA:67940"/>
        <dbReference type="ChEBI" id="CHEBI:15379"/>
        <dbReference type="ChEBI" id="CHEBI:16240"/>
        <dbReference type="ChEBI" id="CHEBI:133514"/>
        <dbReference type="ChEBI" id="CHEBI:176689"/>
    </reaction>
    <physiologicalReaction direction="left-to-right" evidence="2">
        <dbReference type="Rhea" id="RHEA:67941"/>
    </physiologicalReaction>
</comment>
<comment type="cofactor">
    <cofactor evidence="3">
        <name>FMN</name>
        <dbReference type="ChEBI" id="CHEBI:58210"/>
    </cofactor>
</comment>
<comment type="pathway">
    <text evidence="2">Lipid metabolism; fatty acid metabolism.</text>
</comment>
<comment type="subunit">
    <text evidence="3">Homotetramer.</text>
</comment>
<comment type="subcellular location">
    <subcellularLocation>
        <location evidence="2">Peroxisome</location>
    </subcellularLocation>
</comment>
<comment type="similarity">
    <text evidence="5">Belongs to the FMN-dependent alpha-hydroxy acid dehydrogenase family.</text>
</comment>